<sequence>MEELQGYLEKDRSRQQHFLYPLLFQEYIYALAHDYGLNGSIFYESAEVFGYDNKSSLALVKRLITRIYQQKSLIYLVNNSKQNRFVGHTHNNFFYSQMISESFSIIVEIPFSLRLVSYLKEKEIPKYHNLRSIHSIFPFLEDKLSHLNYVSAILIPHPIHMEILVQILQCWIQDVPFLHLLRFFLHEYHNWNSFLITQKKSIFVFSKEKKRLFRFIYNFYVFECEFLFVFIRNQSSYLRLTSFGTFLERTHFYGKIEHLQIEKLIVICRNDFHRTFWFFKDPFMHYVRYQGKAILASKGTHLLMTKWKYHFVNFWQYYFNFWSQPYRIQINQLSNYSFYFLGYLSSLLINSSAVRNQMLENSFIIDTLTKKFDTIVPVILLIGSLSKAKFCTISGHPISKPIWANLSDSDILDRFGRICRNLFHYHSGSSKKQGLYRIKYILRLSCARTLARKHKSTVRTFLRRLGSGLLEEFFTEEEEVLSLMFPKTTSYTLHGSHRERIWFLDIIRINDLVNRS</sequence>
<comment type="function">
    <text evidence="1">Usually encoded in the trnK tRNA gene intron. Probably assists in splicing its own and other chloroplast group II introns.</text>
</comment>
<comment type="subcellular location">
    <subcellularLocation>
        <location>Plastid</location>
        <location>Chloroplast</location>
    </subcellularLocation>
</comment>
<comment type="similarity">
    <text evidence="1">Belongs to the intron maturase 2 family. MatK subfamily.</text>
</comment>
<dbReference type="EMBL" id="AY101335">
    <property type="protein sequence ID" value="AAO11719.1"/>
    <property type="molecule type" value="Genomic_DNA"/>
</dbReference>
<dbReference type="GO" id="GO:0009507">
    <property type="term" value="C:chloroplast"/>
    <property type="evidence" value="ECO:0007669"/>
    <property type="project" value="UniProtKB-SubCell"/>
</dbReference>
<dbReference type="GO" id="GO:0003723">
    <property type="term" value="F:RNA binding"/>
    <property type="evidence" value="ECO:0007669"/>
    <property type="project" value="UniProtKB-KW"/>
</dbReference>
<dbReference type="GO" id="GO:0006397">
    <property type="term" value="P:mRNA processing"/>
    <property type="evidence" value="ECO:0007669"/>
    <property type="project" value="UniProtKB-KW"/>
</dbReference>
<dbReference type="GO" id="GO:0008380">
    <property type="term" value="P:RNA splicing"/>
    <property type="evidence" value="ECO:0007669"/>
    <property type="project" value="UniProtKB-UniRule"/>
</dbReference>
<dbReference type="GO" id="GO:0008033">
    <property type="term" value="P:tRNA processing"/>
    <property type="evidence" value="ECO:0007669"/>
    <property type="project" value="UniProtKB-KW"/>
</dbReference>
<dbReference type="HAMAP" id="MF_01390">
    <property type="entry name" value="MatK"/>
    <property type="match status" value="1"/>
</dbReference>
<dbReference type="InterPro" id="IPR024937">
    <property type="entry name" value="Domain_X"/>
</dbReference>
<dbReference type="InterPro" id="IPR002866">
    <property type="entry name" value="Maturase_MatK"/>
</dbReference>
<dbReference type="InterPro" id="IPR024942">
    <property type="entry name" value="Maturase_MatK_N"/>
</dbReference>
<dbReference type="PANTHER" id="PTHR34811">
    <property type="entry name" value="MATURASE K"/>
    <property type="match status" value="1"/>
</dbReference>
<dbReference type="PANTHER" id="PTHR34811:SF1">
    <property type="entry name" value="MATURASE K"/>
    <property type="match status" value="1"/>
</dbReference>
<dbReference type="Pfam" id="PF01348">
    <property type="entry name" value="Intron_maturas2"/>
    <property type="match status" value="1"/>
</dbReference>
<dbReference type="Pfam" id="PF01824">
    <property type="entry name" value="MatK_N"/>
    <property type="match status" value="1"/>
</dbReference>
<proteinExistence type="inferred from homology"/>
<name>MATK_GALNI</name>
<feature type="chain" id="PRO_0000143395" description="Maturase K">
    <location>
        <begin position="1"/>
        <end position="516"/>
    </location>
</feature>
<accession>Q8GV94</accession>
<gene>
    <name evidence="1" type="primary">matK</name>
</gene>
<organism>
    <name type="scientific">Galanthus nivalis</name>
    <name type="common">Common snowdrop</name>
    <dbReference type="NCBI Taxonomy" id="4670"/>
    <lineage>
        <taxon>Eukaryota</taxon>
        <taxon>Viridiplantae</taxon>
        <taxon>Streptophyta</taxon>
        <taxon>Embryophyta</taxon>
        <taxon>Tracheophyta</taxon>
        <taxon>Spermatophyta</taxon>
        <taxon>Magnoliopsida</taxon>
        <taxon>Liliopsida</taxon>
        <taxon>Asparagales</taxon>
        <taxon>Amaryllidaceae</taxon>
        <taxon>Amaryllidoideae</taxon>
        <taxon>Galanthus</taxon>
    </lineage>
</organism>
<geneLocation type="chloroplast"/>
<keyword id="KW-0150">Chloroplast</keyword>
<keyword id="KW-0507">mRNA processing</keyword>
<keyword id="KW-0934">Plastid</keyword>
<keyword id="KW-0694">RNA-binding</keyword>
<keyword id="KW-0819">tRNA processing</keyword>
<reference key="1">
    <citation type="journal article" date="2004" name="Plant Syst. Evol.">
        <title>Phylogenetic analysis of Leucojum and Galanthus (Amaryllidaceae) based on plastid matK and nuclear ribosomal spacer (ITS) DNA sequences and morphology.</title>
        <authorList>
            <person name="Lledo D.M."/>
            <person name="Davis A.P."/>
            <person name="Crespo M.B."/>
            <person name="Chase M.W."/>
            <person name="Fay M.F."/>
        </authorList>
    </citation>
    <scope>NUCLEOTIDE SEQUENCE [GENOMIC DNA]</scope>
</reference>
<protein>
    <recommendedName>
        <fullName evidence="1">Maturase K</fullName>
    </recommendedName>
    <alternativeName>
        <fullName evidence="1">Intron maturase</fullName>
    </alternativeName>
</protein>
<evidence type="ECO:0000255" key="1">
    <source>
        <dbReference type="HAMAP-Rule" id="MF_01390"/>
    </source>
</evidence>